<proteinExistence type="evidence at transcript level"/>
<reference key="1">
    <citation type="journal article" date="2002" name="Nature">
        <title>The genome sequence and structure of rice chromosome 1.</title>
        <authorList>
            <person name="Sasaki T."/>
            <person name="Matsumoto T."/>
            <person name="Yamamoto K."/>
            <person name="Sakata K."/>
            <person name="Baba T."/>
            <person name="Katayose Y."/>
            <person name="Wu J."/>
            <person name="Niimura Y."/>
            <person name="Cheng Z."/>
            <person name="Nagamura Y."/>
            <person name="Antonio B.A."/>
            <person name="Kanamori H."/>
            <person name="Hosokawa S."/>
            <person name="Masukawa M."/>
            <person name="Arikawa K."/>
            <person name="Chiden Y."/>
            <person name="Hayashi M."/>
            <person name="Okamoto M."/>
            <person name="Ando T."/>
            <person name="Aoki H."/>
            <person name="Arita K."/>
            <person name="Hamada M."/>
            <person name="Harada C."/>
            <person name="Hijishita S."/>
            <person name="Honda M."/>
            <person name="Ichikawa Y."/>
            <person name="Idonuma A."/>
            <person name="Iijima M."/>
            <person name="Ikeda M."/>
            <person name="Ikeno M."/>
            <person name="Ito S."/>
            <person name="Ito T."/>
            <person name="Ito Y."/>
            <person name="Ito Y."/>
            <person name="Iwabuchi A."/>
            <person name="Kamiya K."/>
            <person name="Karasawa W."/>
            <person name="Katagiri S."/>
            <person name="Kikuta A."/>
            <person name="Kobayashi N."/>
            <person name="Kono I."/>
            <person name="Machita K."/>
            <person name="Maehara T."/>
            <person name="Mizuno H."/>
            <person name="Mizubayashi T."/>
            <person name="Mukai Y."/>
            <person name="Nagasaki H."/>
            <person name="Nakashima M."/>
            <person name="Nakama Y."/>
            <person name="Nakamichi Y."/>
            <person name="Nakamura M."/>
            <person name="Namiki N."/>
            <person name="Negishi M."/>
            <person name="Ohta I."/>
            <person name="Ono N."/>
            <person name="Saji S."/>
            <person name="Sakai K."/>
            <person name="Shibata M."/>
            <person name="Shimokawa T."/>
            <person name="Shomura A."/>
            <person name="Song J."/>
            <person name="Takazaki Y."/>
            <person name="Terasawa K."/>
            <person name="Tsuji K."/>
            <person name="Waki K."/>
            <person name="Yamagata H."/>
            <person name="Yamane H."/>
            <person name="Yoshiki S."/>
            <person name="Yoshihara R."/>
            <person name="Yukawa K."/>
            <person name="Zhong H."/>
            <person name="Iwama H."/>
            <person name="Endo T."/>
            <person name="Ito H."/>
            <person name="Hahn J.H."/>
            <person name="Kim H.-I."/>
            <person name="Eun M.-Y."/>
            <person name="Yano M."/>
            <person name="Jiang J."/>
            <person name="Gojobori T."/>
        </authorList>
    </citation>
    <scope>NUCLEOTIDE SEQUENCE [LARGE SCALE GENOMIC DNA]</scope>
    <source>
        <strain>cv. Nipponbare</strain>
    </source>
</reference>
<reference key="2">
    <citation type="journal article" date="2005" name="Nature">
        <title>The map-based sequence of the rice genome.</title>
        <authorList>
            <consortium name="International rice genome sequencing project (IRGSP)"/>
        </authorList>
    </citation>
    <scope>NUCLEOTIDE SEQUENCE [LARGE SCALE GENOMIC DNA]</scope>
    <source>
        <strain>cv. Nipponbare</strain>
    </source>
</reference>
<reference key="3">
    <citation type="journal article" date="2008" name="Nucleic Acids Res.">
        <title>The rice annotation project database (RAP-DB): 2008 update.</title>
        <authorList>
            <consortium name="The rice annotation project (RAP)"/>
        </authorList>
    </citation>
    <scope>GENOME REANNOTATION</scope>
    <source>
        <strain>cv. Nipponbare</strain>
    </source>
</reference>
<reference key="4">
    <citation type="journal article" date="2013" name="Rice">
        <title>Improvement of the Oryza sativa Nipponbare reference genome using next generation sequence and optical map data.</title>
        <authorList>
            <person name="Kawahara Y."/>
            <person name="de la Bastide M."/>
            <person name="Hamilton J.P."/>
            <person name="Kanamori H."/>
            <person name="McCombie W.R."/>
            <person name="Ouyang S."/>
            <person name="Schwartz D.C."/>
            <person name="Tanaka T."/>
            <person name="Wu J."/>
            <person name="Zhou S."/>
            <person name="Childs K.L."/>
            <person name="Davidson R.M."/>
            <person name="Lin H."/>
            <person name="Quesada-Ocampo L."/>
            <person name="Vaillancourt B."/>
            <person name="Sakai H."/>
            <person name="Lee S.S."/>
            <person name="Kim J."/>
            <person name="Numa H."/>
            <person name="Itoh T."/>
            <person name="Buell C.R."/>
            <person name="Matsumoto T."/>
        </authorList>
    </citation>
    <scope>GENOME REANNOTATION</scope>
    <source>
        <strain>cv. Nipponbare</strain>
    </source>
</reference>
<reference key="5">
    <citation type="journal article" date="2005" name="PLoS Biol.">
        <title>The genomes of Oryza sativa: a history of duplications.</title>
        <authorList>
            <person name="Yu J."/>
            <person name="Wang J."/>
            <person name="Lin W."/>
            <person name="Li S."/>
            <person name="Li H."/>
            <person name="Zhou J."/>
            <person name="Ni P."/>
            <person name="Dong W."/>
            <person name="Hu S."/>
            <person name="Zeng C."/>
            <person name="Zhang J."/>
            <person name="Zhang Y."/>
            <person name="Li R."/>
            <person name="Xu Z."/>
            <person name="Li S."/>
            <person name="Li X."/>
            <person name="Zheng H."/>
            <person name="Cong L."/>
            <person name="Lin L."/>
            <person name="Yin J."/>
            <person name="Geng J."/>
            <person name="Li G."/>
            <person name="Shi J."/>
            <person name="Liu J."/>
            <person name="Lv H."/>
            <person name="Li J."/>
            <person name="Wang J."/>
            <person name="Deng Y."/>
            <person name="Ran L."/>
            <person name="Shi X."/>
            <person name="Wang X."/>
            <person name="Wu Q."/>
            <person name="Li C."/>
            <person name="Ren X."/>
            <person name="Wang J."/>
            <person name="Wang X."/>
            <person name="Li D."/>
            <person name="Liu D."/>
            <person name="Zhang X."/>
            <person name="Ji Z."/>
            <person name="Zhao W."/>
            <person name="Sun Y."/>
            <person name="Zhang Z."/>
            <person name="Bao J."/>
            <person name="Han Y."/>
            <person name="Dong L."/>
            <person name="Ji J."/>
            <person name="Chen P."/>
            <person name="Wu S."/>
            <person name="Liu J."/>
            <person name="Xiao Y."/>
            <person name="Bu D."/>
            <person name="Tan J."/>
            <person name="Yang L."/>
            <person name="Ye C."/>
            <person name="Zhang J."/>
            <person name="Xu J."/>
            <person name="Zhou Y."/>
            <person name="Yu Y."/>
            <person name="Zhang B."/>
            <person name="Zhuang S."/>
            <person name="Wei H."/>
            <person name="Liu B."/>
            <person name="Lei M."/>
            <person name="Yu H."/>
            <person name="Li Y."/>
            <person name="Xu H."/>
            <person name="Wei S."/>
            <person name="He X."/>
            <person name="Fang L."/>
            <person name="Zhang Z."/>
            <person name="Zhang Y."/>
            <person name="Huang X."/>
            <person name="Su Z."/>
            <person name="Tong W."/>
            <person name="Li J."/>
            <person name="Tong Z."/>
            <person name="Li S."/>
            <person name="Ye J."/>
            <person name="Wang L."/>
            <person name="Fang L."/>
            <person name="Lei T."/>
            <person name="Chen C.-S."/>
            <person name="Chen H.-C."/>
            <person name="Xu Z."/>
            <person name="Li H."/>
            <person name="Huang H."/>
            <person name="Zhang F."/>
            <person name="Xu H."/>
            <person name="Li N."/>
            <person name="Zhao C."/>
            <person name="Li S."/>
            <person name="Dong L."/>
            <person name="Huang Y."/>
            <person name="Li L."/>
            <person name="Xi Y."/>
            <person name="Qi Q."/>
            <person name="Li W."/>
            <person name="Zhang B."/>
            <person name="Hu W."/>
            <person name="Zhang Y."/>
            <person name="Tian X."/>
            <person name="Jiao Y."/>
            <person name="Liang X."/>
            <person name="Jin J."/>
            <person name="Gao L."/>
            <person name="Zheng W."/>
            <person name="Hao B."/>
            <person name="Liu S.-M."/>
            <person name="Wang W."/>
            <person name="Yuan L."/>
            <person name="Cao M."/>
            <person name="McDermott J."/>
            <person name="Samudrala R."/>
            <person name="Wang J."/>
            <person name="Wong G.K.-S."/>
            <person name="Yang H."/>
        </authorList>
    </citation>
    <scope>NUCLEOTIDE SEQUENCE [LARGE SCALE GENOMIC DNA]</scope>
    <source>
        <strain>cv. Nipponbare</strain>
    </source>
</reference>
<reference key="6">
    <citation type="journal article" date="2003" name="Science">
        <title>Collection, mapping, and annotation of over 28,000 cDNA clones from japonica rice.</title>
        <authorList>
            <consortium name="The rice full-length cDNA consortium"/>
        </authorList>
    </citation>
    <scope>NUCLEOTIDE SEQUENCE [LARGE SCALE MRNA]</scope>
    <source>
        <strain>cv. Nipponbare</strain>
    </source>
</reference>
<reference key="7">
    <citation type="journal article" date="2006" name="Mol. Plant Microbe Interact.">
        <title>Molecular analysis of the rice MAP kinase gene family in relation to Magnaporthe grisea infection.</title>
        <authorList>
            <person name="Reyna N.S."/>
            <person name="Yang Y."/>
        </authorList>
    </citation>
    <scope>NOMENCLATURE</scope>
</reference>
<keyword id="KW-0067">ATP-binding</keyword>
<keyword id="KW-0418">Kinase</keyword>
<keyword id="KW-0547">Nucleotide-binding</keyword>
<keyword id="KW-0597">Phosphoprotein</keyword>
<keyword id="KW-1185">Reference proteome</keyword>
<keyword id="KW-0723">Serine/threonine-protein kinase</keyword>
<keyword id="KW-0808">Transferase</keyword>
<comment type="catalytic activity">
    <reaction>
        <text>L-seryl-[protein] + ATP = O-phospho-L-seryl-[protein] + ADP + H(+)</text>
        <dbReference type="Rhea" id="RHEA:17989"/>
        <dbReference type="Rhea" id="RHEA-COMP:9863"/>
        <dbReference type="Rhea" id="RHEA-COMP:11604"/>
        <dbReference type="ChEBI" id="CHEBI:15378"/>
        <dbReference type="ChEBI" id="CHEBI:29999"/>
        <dbReference type="ChEBI" id="CHEBI:30616"/>
        <dbReference type="ChEBI" id="CHEBI:83421"/>
        <dbReference type="ChEBI" id="CHEBI:456216"/>
        <dbReference type="EC" id="2.7.11.24"/>
    </reaction>
</comment>
<comment type="catalytic activity">
    <reaction>
        <text>L-threonyl-[protein] + ATP = O-phospho-L-threonyl-[protein] + ADP + H(+)</text>
        <dbReference type="Rhea" id="RHEA:46608"/>
        <dbReference type="Rhea" id="RHEA-COMP:11060"/>
        <dbReference type="Rhea" id="RHEA-COMP:11605"/>
        <dbReference type="ChEBI" id="CHEBI:15378"/>
        <dbReference type="ChEBI" id="CHEBI:30013"/>
        <dbReference type="ChEBI" id="CHEBI:30616"/>
        <dbReference type="ChEBI" id="CHEBI:61977"/>
        <dbReference type="ChEBI" id="CHEBI:456216"/>
        <dbReference type="EC" id="2.7.11.24"/>
    </reaction>
</comment>
<comment type="activity regulation">
    <text evidence="1">Activated by threonine and tyrosine phosphorylation.</text>
</comment>
<comment type="domain">
    <text>The TXY motif contains the threonine and tyrosine residues whose phosphorylation activates the MAP kinases.</text>
</comment>
<comment type="PTM">
    <text evidence="1">Dually phosphorylated on Thr-187 and Tyr-189, which activates the enzyme.</text>
</comment>
<comment type="similarity">
    <text evidence="4">Belongs to the protein kinase superfamily. CMGC Ser/Thr protein kinase family. MAP kinase subfamily.</text>
</comment>
<comment type="sequence caution" evidence="4">
    <conflict type="erroneous gene model prediction">
        <sequence resource="EMBL-CDS" id="BAD61402"/>
    </conflict>
</comment>
<comment type="sequence caution" evidence="4">
    <conflict type="erroneous gene model prediction">
        <sequence resource="EMBL-CDS" id="BAD61403"/>
    </conflict>
</comment>
<gene>
    <name type="primary">MPK10</name>
    <name evidence="5" type="ordered locus">Os01g0629900</name>
    <name evidence="4" type="ordered locus">LOC_Os01g43910</name>
    <name evidence="6" type="ORF">OsJ_02699</name>
    <name type="ORF">OSJNBb0035I14.5-1</name>
    <name type="ORF">OSJNBb0035I14.5-2</name>
    <name type="ORF">OSJNBb0035I14.5-3</name>
</gene>
<organism>
    <name type="scientific">Oryza sativa subsp. japonica</name>
    <name type="common">Rice</name>
    <dbReference type="NCBI Taxonomy" id="39947"/>
    <lineage>
        <taxon>Eukaryota</taxon>
        <taxon>Viridiplantae</taxon>
        <taxon>Streptophyta</taxon>
        <taxon>Embryophyta</taxon>
        <taxon>Tracheophyta</taxon>
        <taxon>Spermatophyta</taxon>
        <taxon>Magnoliopsida</taxon>
        <taxon>Liliopsida</taxon>
        <taxon>Poales</taxon>
        <taxon>Poaceae</taxon>
        <taxon>BOP clade</taxon>
        <taxon>Oryzoideae</taxon>
        <taxon>Oryzeae</taxon>
        <taxon>Oryzinae</taxon>
        <taxon>Oryza</taxon>
        <taxon>Oryza sativa</taxon>
    </lineage>
</organism>
<evidence type="ECO:0000250" key="1"/>
<evidence type="ECO:0000255" key="2">
    <source>
        <dbReference type="PROSITE-ProRule" id="PRU00159"/>
    </source>
</evidence>
<evidence type="ECO:0000256" key="3">
    <source>
        <dbReference type="SAM" id="MobiDB-lite"/>
    </source>
</evidence>
<evidence type="ECO:0000305" key="4"/>
<evidence type="ECO:0000312" key="5">
    <source>
        <dbReference type="EMBL" id="BAF05556.1"/>
    </source>
</evidence>
<evidence type="ECO:0000312" key="6">
    <source>
        <dbReference type="EMBL" id="EEE55030.1"/>
    </source>
</evidence>
<dbReference type="EC" id="2.7.11.24"/>
<dbReference type="EMBL" id="AP003220">
    <property type="protein sequence ID" value="BAD61401.1"/>
    <property type="molecule type" value="Genomic_DNA"/>
</dbReference>
<dbReference type="EMBL" id="AP003220">
    <property type="protein sequence ID" value="BAD61402.1"/>
    <property type="status" value="ALT_SEQ"/>
    <property type="molecule type" value="Genomic_DNA"/>
</dbReference>
<dbReference type="EMBL" id="AP003220">
    <property type="protein sequence ID" value="BAD61403.1"/>
    <property type="status" value="ALT_SEQ"/>
    <property type="molecule type" value="Genomic_DNA"/>
</dbReference>
<dbReference type="EMBL" id="AP008207">
    <property type="protein sequence ID" value="BAF05556.1"/>
    <property type="molecule type" value="Genomic_DNA"/>
</dbReference>
<dbReference type="EMBL" id="AP014957">
    <property type="protein sequence ID" value="BAS73284.1"/>
    <property type="molecule type" value="Genomic_DNA"/>
</dbReference>
<dbReference type="EMBL" id="CM000138">
    <property type="protein sequence ID" value="EEE55030.1"/>
    <property type="molecule type" value="Genomic_DNA"/>
</dbReference>
<dbReference type="EMBL" id="AK065930">
    <property type="status" value="NOT_ANNOTATED_CDS"/>
    <property type="molecule type" value="mRNA"/>
</dbReference>
<dbReference type="RefSeq" id="XP_015621247.1">
    <property type="nucleotide sequence ID" value="XM_015765761.1"/>
</dbReference>
<dbReference type="SMR" id="Q5ZCI1"/>
<dbReference type="FunCoup" id="Q5ZCI1">
    <property type="interactions" value="797"/>
</dbReference>
<dbReference type="STRING" id="39947.Q5ZCI1"/>
<dbReference type="PaxDb" id="39947-Q5ZCI1"/>
<dbReference type="EnsemblPlants" id="Os01t0629900-01">
    <property type="protein sequence ID" value="Os01t0629900-01"/>
    <property type="gene ID" value="Os01g0629900"/>
</dbReference>
<dbReference type="Gramene" id="Os01t0629900-01">
    <property type="protein sequence ID" value="Os01t0629900-01"/>
    <property type="gene ID" value="Os01g0629900"/>
</dbReference>
<dbReference type="KEGG" id="dosa:Os01g0629900"/>
<dbReference type="eggNOG" id="KOG0660">
    <property type="taxonomic scope" value="Eukaryota"/>
</dbReference>
<dbReference type="HOGENOM" id="CLU_000288_181_13_1"/>
<dbReference type="InParanoid" id="Q5ZCI1"/>
<dbReference type="OMA" id="VPQCGMA"/>
<dbReference type="OrthoDB" id="2396at2759"/>
<dbReference type="Proteomes" id="UP000000763">
    <property type="component" value="Chromosome 1"/>
</dbReference>
<dbReference type="Proteomes" id="UP000007752">
    <property type="component" value="Chromosome 1"/>
</dbReference>
<dbReference type="Proteomes" id="UP000059680">
    <property type="component" value="Chromosome 1"/>
</dbReference>
<dbReference type="ExpressionAtlas" id="Q5ZCI1">
    <property type="expression patterns" value="baseline and differential"/>
</dbReference>
<dbReference type="GO" id="GO:0005737">
    <property type="term" value="C:cytoplasm"/>
    <property type="evidence" value="ECO:0000318"/>
    <property type="project" value="GO_Central"/>
</dbReference>
<dbReference type="GO" id="GO:0005634">
    <property type="term" value="C:nucleus"/>
    <property type="evidence" value="ECO:0000318"/>
    <property type="project" value="GO_Central"/>
</dbReference>
<dbReference type="GO" id="GO:0005524">
    <property type="term" value="F:ATP binding"/>
    <property type="evidence" value="ECO:0007669"/>
    <property type="project" value="UniProtKB-KW"/>
</dbReference>
<dbReference type="GO" id="GO:0004707">
    <property type="term" value="F:MAP kinase activity"/>
    <property type="evidence" value="ECO:0007669"/>
    <property type="project" value="UniProtKB-EC"/>
</dbReference>
<dbReference type="GO" id="GO:0106310">
    <property type="term" value="F:protein serine kinase activity"/>
    <property type="evidence" value="ECO:0007669"/>
    <property type="project" value="RHEA"/>
</dbReference>
<dbReference type="GO" id="GO:0004674">
    <property type="term" value="F:protein serine/threonine kinase activity"/>
    <property type="evidence" value="ECO:0000318"/>
    <property type="project" value="GO_Central"/>
</dbReference>
<dbReference type="GO" id="GO:0035556">
    <property type="term" value="P:intracellular signal transduction"/>
    <property type="evidence" value="ECO:0000318"/>
    <property type="project" value="GO_Central"/>
</dbReference>
<dbReference type="CDD" id="cd07859">
    <property type="entry name" value="STKc_TDY_MAPK"/>
    <property type="match status" value="1"/>
</dbReference>
<dbReference type="FunFam" id="1.10.510.10:FF:000017">
    <property type="entry name" value="Mitogen-activated protein kinase"/>
    <property type="match status" value="1"/>
</dbReference>
<dbReference type="FunFam" id="3.30.200.20:FF:000046">
    <property type="entry name" value="Mitogen-activated protein kinase"/>
    <property type="match status" value="1"/>
</dbReference>
<dbReference type="Gene3D" id="3.30.200.20">
    <property type="entry name" value="Phosphorylase Kinase, domain 1"/>
    <property type="match status" value="1"/>
</dbReference>
<dbReference type="Gene3D" id="1.10.510.10">
    <property type="entry name" value="Transferase(Phosphotransferase) domain 1"/>
    <property type="match status" value="1"/>
</dbReference>
<dbReference type="InterPro" id="IPR011009">
    <property type="entry name" value="Kinase-like_dom_sf"/>
</dbReference>
<dbReference type="InterPro" id="IPR050117">
    <property type="entry name" value="MAP_kinase"/>
</dbReference>
<dbReference type="InterPro" id="IPR003527">
    <property type="entry name" value="MAP_kinase_CS"/>
</dbReference>
<dbReference type="InterPro" id="IPR000719">
    <property type="entry name" value="Prot_kinase_dom"/>
</dbReference>
<dbReference type="InterPro" id="IPR017441">
    <property type="entry name" value="Protein_kinase_ATP_BS"/>
</dbReference>
<dbReference type="PANTHER" id="PTHR24055">
    <property type="entry name" value="MITOGEN-ACTIVATED PROTEIN KINASE"/>
    <property type="match status" value="1"/>
</dbReference>
<dbReference type="Pfam" id="PF00069">
    <property type="entry name" value="Pkinase"/>
    <property type="match status" value="1"/>
</dbReference>
<dbReference type="SMART" id="SM00220">
    <property type="entry name" value="S_TKc"/>
    <property type="match status" value="1"/>
</dbReference>
<dbReference type="SUPFAM" id="SSF56112">
    <property type="entry name" value="Protein kinase-like (PK-like)"/>
    <property type="match status" value="1"/>
</dbReference>
<dbReference type="PROSITE" id="PS01351">
    <property type="entry name" value="MAPK"/>
    <property type="match status" value="1"/>
</dbReference>
<dbReference type="PROSITE" id="PS00107">
    <property type="entry name" value="PROTEIN_KINASE_ATP"/>
    <property type="match status" value="1"/>
</dbReference>
<dbReference type="PROSITE" id="PS50011">
    <property type="entry name" value="PROTEIN_KINASE_DOM"/>
    <property type="match status" value="1"/>
</dbReference>
<name>MPK10_ORYSJ</name>
<sequence>MQQDQRKKSSTEADFFTEYGDASRYKIQEVIGKGSYGVVCSAIDVHTGEKVAIKKIHDIFEHISDAARILREIKLLRLLRHPDIVEIKHIMLPPSRRDFKDIYVVFELMESDLHQVIKANDDLTKEHYQFFLYQLLRALKYIHTANVYHRDLKPKNILANSNCKLKICDFGLARVAFNDTPTTIFWTDYVATRWYRAPELCGSFFSKYTPAIDIWSIGCIFAEVLTGKPLFPGKNVVHQLDLMTDLLGTPSMDTISRVRNDKARRYLSSMRKKEPILFSQKFPSADPLALDLLQKLLAFDPKDRPTAEEALAHPYFKGLAKVEREPSCQPITKMEFEFERRRVTKEDIRELIFREILEYHPQLLKDYINGTERTTFLYPSAVDQFRKQFAHLEENGGNGPVIPMDRKHTSLPRSTIVHSTPIPAKEQPRIGPSRDKPSDEPYSNPREFDRFSGNAPRTSQAPQRVPTARPGRVVGPVLPYENGATKDSYDARRLAMNSGYPPQQQIPQAYGYYQIPGKSACSELSQAERYTLHQQAYTCANSATVTDVALDMRAPPFHLSGGPKSDSSERLAAETNLYTRSLNGLAATAAGVAASAHRKVGVVPYGMSRMY</sequence>
<accession>Q5ZCI1</accession>
<accession>A0A0P0V5I8</accession>
<accession>Q0JL22</accession>
<accession>Q5ZCI2</accession>
<accession>Q5ZCI3</accession>
<protein>
    <recommendedName>
        <fullName>Mitogen-activated protein kinase 10</fullName>
        <shortName>MAP kinase 10</shortName>
        <ecNumber>2.7.11.24</ecNumber>
    </recommendedName>
</protein>
<feature type="chain" id="PRO_0000239753" description="Mitogen-activated protein kinase 10">
    <location>
        <begin position="1"/>
        <end position="611"/>
    </location>
</feature>
<feature type="domain" description="Protein kinase" evidence="2">
    <location>
        <begin position="25"/>
        <end position="316"/>
    </location>
</feature>
<feature type="region of interest" description="Disordered" evidence="3">
    <location>
        <begin position="394"/>
        <end position="481"/>
    </location>
</feature>
<feature type="short sequence motif" description="TXY">
    <location>
        <begin position="187"/>
        <end position="189"/>
    </location>
</feature>
<feature type="compositionally biased region" description="Basic and acidic residues" evidence="3">
    <location>
        <begin position="426"/>
        <end position="439"/>
    </location>
</feature>
<feature type="active site" description="Proton acceptor" evidence="2">
    <location>
        <position position="151"/>
    </location>
</feature>
<feature type="binding site" evidence="2">
    <location>
        <begin position="31"/>
        <end position="39"/>
    </location>
    <ligand>
        <name>ATP</name>
        <dbReference type="ChEBI" id="CHEBI:30616"/>
    </ligand>
</feature>
<feature type="binding site" evidence="2">
    <location>
        <position position="54"/>
    </location>
    <ligand>
        <name>ATP</name>
        <dbReference type="ChEBI" id="CHEBI:30616"/>
    </ligand>
</feature>
<feature type="modified residue" description="Phosphothreonine" evidence="1">
    <location>
        <position position="187"/>
    </location>
</feature>
<feature type="modified residue" description="Phosphotyrosine" evidence="1">
    <location>
        <position position="189"/>
    </location>
</feature>
<feature type="sequence conflict" description="In Ref. 6; AK065930." evidence="4" ref="6">
    <original>K</original>
    <variation>R</variation>
    <location>
        <position position="153"/>
    </location>
</feature>